<comment type="function">
    <text evidence="6">G-protein coupled receptor involved in the regulation of cell volume.</text>
</comment>
<comment type="subcellular location">
    <subcellularLocation>
        <location evidence="5">Cell membrane</location>
        <topology evidence="5">Multi-pass membrane protein</topology>
    </subcellularLocation>
    <subcellularLocation>
        <location evidence="5">Cytoplasmic vesicle membrane</location>
        <topology evidence="5">Multi-pass membrane protein</topology>
    </subcellularLocation>
    <text>Localized in the plasma membrane and perinuclear vesicles.</text>
</comment>
<comment type="alternative products">
    <event type="alternative splicing"/>
    <isoform>
        <id>Q9NZH0-1</id>
        <name>1</name>
        <sequence type="displayed"/>
    </isoform>
    <isoform>
        <id>Q9NZH0-2</id>
        <name>2</name>
        <sequence type="described" ref="VSP_047585"/>
    </isoform>
</comment>
<comment type="tissue specificity">
    <text evidence="4 5 6">Expression is high in kidney, pancreas, and testis, medium in brain, heart, prostate, small intestine, and spleen, low in liver, placenta, skeletal muscle, colon, ovary, and thymus, and not detectable in lung and peripheral leukocyte. According to PubMed:10945465, highly expressed in most brain areas examined, with the highest levels observed in corpus callosum, caudate nucleus, putamen, substantia nigra, thalamus, hippocampus, and spinal cord as well as in dorsal root ganglia (DRG). Expressed in glia limitans, ependymal cells, astrocyte cell bodies, the perivascular region in astrocyte endfeet, but not in neurons (PubMed:37143309). In the periphery, expression levels are relatively low, compared to the CNS, with the strongest expression detected in pancreas, testis, uterus, and stomach.</text>
</comment>
<comment type="induction">
    <text evidence="5">By all-trans retinoic acid (ATRA).</text>
</comment>
<comment type="disease" evidence="6">
    <disease id="DI-06722">
        <name>Megalencephalic leukoencephalopathy with subcortical cysts 3</name>
        <acronym>MLC3</acronym>
        <description>An autosomal dominant disorder characterized by increased head circumference apparent in infancy, followed by progressive motor and cognitive decline in early childhood. Affected individuals either do not achieve walking or lose independent ambulation in the first or second decades. Cognitive impairment is variable and accompanied by poor speech and dysarthria. Most patients have early-onset seizures, which may be mild or refractory. Brain imaging shows unremitting megalencephalic leukoencephalopathy with subcortical cysts and swelling of the cerebral white matter.</description>
        <dbReference type="MIM" id="620447"/>
    </disease>
    <text>The disease is caused by variants affecting the gene represented in this entry.</text>
</comment>
<comment type="similarity">
    <text evidence="8">Belongs to the G-protein coupled receptor 3 family.</text>
</comment>
<comment type="caution">
    <text evidence="8">It is uncertain whether Met-1 or Met-9 is the initiator.</text>
</comment>
<accession>Q9NZH0</accession>
<accession>D2DFB0</accession>
<accession>O75205</accession>
<accession>Q8NBZ8</accession>
<reference key="1">
    <citation type="journal article" date="2000" name="Genomics">
        <title>Sequence and expression pattern of a novel human orphan G-protein-coupled receptor, GPRC5B, a family C receptor with a short amino-terminal domain.</title>
        <authorList>
            <person name="Braeuner-Osborne H."/>
            <person name="Krogsgaard-Larsen P."/>
        </authorList>
    </citation>
    <scope>NUCLEOTIDE SEQUENCE [MRNA] (ISOFORM 1)</scope>
    <scope>TISSUE SPECIFICITY</scope>
</reference>
<reference key="2">
    <citation type="journal article" date="2000" name="Genomics">
        <title>Molecular cloning and characterization of two novel retinoic acid-inducible orphan G-protein-coupled receptors (GPRC5B and GPRC5C).</title>
        <authorList>
            <person name="Robbins M.J."/>
            <person name="Michalovich D."/>
            <person name="Hill J."/>
            <person name="Calver A.R."/>
            <person name="Medhurst A.D."/>
            <person name="Gloger I."/>
            <person name="Sims M.A."/>
            <person name="Middlemiss D.N."/>
            <person name="Pangalos M.N."/>
        </authorList>
    </citation>
    <scope>NUCLEOTIDE SEQUENCE [MRNA] (ISOFORM 1)</scope>
    <scope>TISSUE SPECIFICITY</scope>
    <scope>SUBCELLULAR LOCATION</scope>
    <scope>INDUCTION</scope>
</reference>
<reference key="3">
    <citation type="submission" date="1999-08" db="EMBL/GenBank/DDBJ databases">
        <title>Cloning of a novel G protein-coupled receptor localized on human chromosome 16p12.</title>
        <authorList>
            <person name="Wei H."/>
            <person name="Osborne B."/>
            <person name="Spruyt M."/>
            <person name="Murphy D."/>
        </authorList>
    </citation>
    <scope>NUCLEOTIDE SEQUENCE [MRNA] (ISOFORM 1)</scope>
    <source>
        <tissue>Brain</tissue>
    </source>
</reference>
<reference key="4">
    <citation type="submission" date="2008-12" db="EMBL/GenBank/DDBJ databases">
        <title>C-terminal splice variants of Gprc5b, an orphan G protein-coupled receptor that binds Frizzled Wnt receptors, are expressed in maturing neurons and influence neurite outgrowth.</title>
        <authorList>
            <person name="Cool B.H."/>
            <person name="Chan G.C.K."/>
            <person name="Lee L."/>
            <person name="Oshima J."/>
            <person name="Martin G.M."/>
            <person name="Hu Q."/>
        </authorList>
    </citation>
    <scope>NUCLEOTIDE SEQUENCE [MRNA] (ISOFORM 2)</scope>
    <source>
        <tissue>Brain</tissue>
    </source>
</reference>
<reference key="5">
    <citation type="journal article" date="2004" name="Nat. Genet.">
        <title>Complete sequencing and characterization of 21,243 full-length human cDNAs.</title>
        <authorList>
            <person name="Ota T."/>
            <person name="Suzuki Y."/>
            <person name="Nishikawa T."/>
            <person name="Otsuki T."/>
            <person name="Sugiyama T."/>
            <person name="Irie R."/>
            <person name="Wakamatsu A."/>
            <person name="Hayashi K."/>
            <person name="Sato H."/>
            <person name="Nagai K."/>
            <person name="Kimura K."/>
            <person name="Makita H."/>
            <person name="Sekine M."/>
            <person name="Obayashi M."/>
            <person name="Nishi T."/>
            <person name="Shibahara T."/>
            <person name="Tanaka T."/>
            <person name="Ishii S."/>
            <person name="Yamamoto J."/>
            <person name="Saito K."/>
            <person name="Kawai Y."/>
            <person name="Isono Y."/>
            <person name="Nakamura Y."/>
            <person name="Nagahari K."/>
            <person name="Murakami K."/>
            <person name="Yasuda T."/>
            <person name="Iwayanagi T."/>
            <person name="Wagatsuma M."/>
            <person name="Shiratori A."/>
            <person name="Sudo H."/>
            <person name="Hosoiri T."/>
            <person name="Kaku Y."/>
            <person name="Kodaira H."/>
            <person name="Kondo H."/>
            <person name="Sugawara M."/>
            <person name="Takahashi M."/>
            <person name="Kanda K."/>
            <person name="Yokoi T."/>
            <person name="Furuya T."/>
            <person name="Kikkawa E."/>
            <person name="Omura Y."/>
            <person name="Abe K."/>
            <person name="Kamihara K."/>
            <person name="Katsuta N."/>
            <person name="Sato K."/>
            <person name="Tanikawa M."/>
            <person name="Yamazaki M."/>
            <person name="Ninomiya K."/>
            <person name="Ishibashi T."/>
            <person name="Yamashita H."/>
            <person name="Murakawa K."/>
            <person name="Fujimori K."/>
            <person name="Tanai H."/>
            <person name="Kimata M."/>
            <person name="Watanabe M."/>
            <person name="Hiraoka S."/>
            <person name="Chiba Y."/>
            <person name="Ishida S."/>
            <person name="Ono Y."/>
            <person name="Takiguchi S."/>
            <person name="Watanabe S."/>
            <person name="Yosida M."/>
            <person name="Hotuta T."/>
            <person name="Kusano J."/>
            <person name="Kanehori K."/>
            <person name="Takahashi-Fujii A."/>
            <person name="Hara H."/>
            <person name="Tanase T.-O."/>
            <person name="Nomura Y."/>
            <person name="Togiya S."/>
            <person name="Komai F."/>
            <person name="Hara R."/>
            <person name="Takeuchi K."/>
            <person name="Arita M."/>
            <person name="Imose N."/>
            <person name="Musashino K."/>
            <person name="Yuuki H."/>
            <person name="Oshima A."/>
            <person name="Sasaki N."/>
            <person name="Aotsuka S."/>
            <person name="Yoshikawa Y."/>
            <person name="Matsunawa H."/>
            <person name="Ichihara T."/>
            <person name="Shiohata N."/>
            <person name="Sano S."/>
            <person name="Moriya S."/>
            <person name="Momiyama H."/>
            <person name="Satoh N."/>
            <person name="Takami S."/>
            <person name="Terashima Y."/>
            <person name="Suzuki O."/>
            <person name="Nakagawa S."/>
            <person name="Senoh A."/>
            <person name="Mizoguchi H."/>
            <person name="Goto Y."/>
            <person name="Shimizu F."/>
            <person name="Wakebe H."/>
            <person name="Hishigaki H."/>
            <person name="Watanabe T."/>
            <person name="Sugiyama A."/>
            <person name="Takemoto M."/>
            <person name="Kawakami B."/>
            <person name="Yamazaki M."/>
            <person name="Watanabe K."/>
            <person name="Kumagai A."/>
            <person name="Itakura S."/>
            <person name="Fukuzumi Y."/>
            <person name="Fujimori Y."/>
            <person name="Komiyama M."/>
            <person name="Tashiro H."/>
            <person name="Tanigami A."/>
            <person name="Fujiwara T."/>
            <person name="Ono T."/>
            <person name="Yamada K."/>
            <person name="Fujii Y."/>
            <person name="Ozaki K."/>
            <person name="Hirao M."/>
            <person name="Ohmori Y."/>
            <person name="Kawabata A."/>
            <person name="Hikiji T."/>
            <person name="Kobatake N."/>
            <person name="Inagaki H."/>
            <person name="Ikema Y."/>
            <person name="Okamoto S."/>
            <person name="Okitani R."/>
            <person name="Kawakami T."/>
            <person name="Noguchi S."/>
            <person name="Itoh T."/>
            <person name="Shigeta K."/>
            <person name="Senba T."/>
            <person name="Matsumura K."/>
            <person name="Nakajima Y."/>
            <person name="Mizuno T."/>
            <person name="Morinaga M."/>
            <person name="Sasaki M."/>
            <person name="Togashi T."/>
            <person name="Oyama M."/>
            <person name="Hata H."/>
            <person name="Watanabe M."/>
            <person name="Komatsu T."/>
            <person name="Mizushima-Sugano J."/>
            <person name="Satoh T."/>
            <person name="Shirai Y."/>
            <person name="Takahashi Y."/>
            <person name="Nakagawa K."/>
            <person name="Okumura K."/>
            <person name="Nagase T."/>
            <person name="Nomura N."/>
            <person name="Kikuchi H."/>
            <person name="Masuho Y."/>
            <person name="Yamashita R."/>
            <person name="Nakai K."/>
            <person name="Yada T."/>
            <person name="Nakamura Y."/>
            <person name="Ohara O."/>
            <person name="Isogai T."/>
            <person name="Sugano S."/>
        </authorList>
    </citation>
    <scope>NUCLEOTIDE SEQUENCE [LARGE SCALE MRNA] (ISOFORM 1)</scope>
    <source>
        <tissue>Placenta</tissue>
    </source>
</reference>
<reference key="6">
    <citation type="journal article" date="1999" name="Genomics">
        <title>Genome duplications and other features in 12 Mb of DNA sequence from human chromosome 16p and 16q.</title>
        <authorList>
            <person name="Loftus B.J."/>
            <person name="Kim U.-J."/>
            <person name="Sneddon V.P."/>
            <person name="Kalush F."/>
            <person name="Brandon R."/>
            <person name="Fuhrmann J."/>
            <person name="Mason T."/>
            <person name="Crosby M.L."/>
            <person name="Barnstead M."/>
            <person name="Cronin L."/>
            <person name="Mays A.D."/>
            <person name="Cao Y."/>
            <person name="Xu R.X."/>
            <person name="Kang H.-L."/>
            <person name="Mitchell S."/>
            <person name="Eichler E.E."/>
            <person name="Harris P.C."/>
            <person name="Venter J.C."/>
            <person name="Adams M.D."/>
        </authorList>
    </citation>
    <scope>NUCLEOTIDE SEQUENCE [LARGE SCALE GENOMIC DNA]</scope>
</reference>
<reference key="7">
    <citation type="journal article" date="2004" name="Nature">
        <title>The sequence and analysis of duplication-rich human chromosome 16.</title>
        <authorList>
            <person name="Martin J."/>
            <person name="Han C."/>
            <person name="Gordon L.A."/>
            <person name="Terry A."/>
            <person name="Prabhakar S."/>
            <person name="She X."/>
            <person name="Xie G."/>
            <person name="Hellsten U."/>
            <person name="Chan Y.M."/>
            <person name="Altherr M."/>
            <person name="Couronne O."/>
            <person name="Aerts A."/>
            <person name="Bajorek E."/>
            <person name="Black S."/>
            <person name="Blumer H."/>
            <person name="Branscomb E."/>
            <person name="Brown N.C."/>
            <person name="Bruno W.J."/>
            <person name="Buckingham J.M."/>
            <person name="Callen D.F."/>
            <person name="Campbell C.S."/>
            <person name="Campbell M.L."/>
            <person name="Campbell E.W."/>
            <person name="Caoile C."/>
            <person name="Challacombe J.F."/>
            <person name="Chasteen L.A."/>
            <person name="Chertkov O."/>
            <person name="Chi H.C."/>
            <person name="Christensen M."/>
            <person name="Clark L.M."/>
            <person name="Cohn J.D."/>
            <person name="Denys M."/>
            <person name="Detter J.C."/>
            <person name="Dickson M."/>
            <person name="Dimitrijevic-Bussod M."/>
            <person name="Escobar J."/>
            <person name="Fawcett J.J."/>
            <person name="Flowers D."/>
            <person name="Fotopulos D."/>
            <person name="Glavina T."/>
            <person name="Gomez M."/>
            <person name="Gonzales E."/>
            <person name="Goodstein D."/>
            <person name="Goodwin L.A."/>
            <person name="Grady D.L."/>
            <person name="Grigoriev I."/>
            <person name="Groza M."/>
            <person name="Hammon N."/>
            <person name="Hawkins T."/>
            <person name="Haydu L."/>
            <person name="Hildebrand C.E."/>
            <person name="Huang W."/>
            <person name="Israni S."/>
            <person name="Jett J."/>
            <person name="Jewett P.B."/>
            <person name="Kadner K."/>
            <person name="Kimball H."/>
            <person name="Kobayashi A."/>
            <person name="Krawczyk M.-C."/>
            <person name="Leyba T."/>
            <person name="Longmire J.L."/>
            <person name="Lopez F."/>
            <person name="Lou Y."/>
            <person name="Lowry S."/>
            <person name="Ludeman T."/>
            <person name="Manohar C.F."/>
            <person name="Mark G.A."/>
            <person name="McMurray K.L."/>
            <person name="Meincke L.J."/>
            <person name="Morgan J."/>
            <person name="Moyzis R.K."/>
            <person name="Mundt M.O."/>
            <person name="Munk A.C."/>
            <person name="Nandkeshwar R.D."/>
            <person name="Pitluck S."/>
            <person name="Pollard M."/>
            <person name="Predki P."/>
            <person name="Parson-Quintana B."/>
            <person name="Ramirez L."/>
            <person name="Rash S."/>
            <person name="Retterer J."/>
            <person name="Ricke D.O."/>
            <person name="Robinson D.L."/>
            <person name="Rodriguez A."/>
            <person name="Salamov A."/>
            <person name="Saunders E.H."/>
            <person name="Scott D."/>
            <person name="Shough T."/>
            <person name="Stallings R.L."/>
            <person name="Stalvey M."/>
            <person name="Sutherland R.D."/>
            <person name="Tapia R."/>
            <person name="Tesmer J.G."/>
            <person name="Thayer N."/>
            <person name="Thompson L.S."/>
            <person name="Tice H."/>
            <person name="Torney D.C."/>
            <person name="Tran-Gyamfi M."/>
            <person name="Tsai M."/>
            <person name="Ulanovsky L.E."/>
            <person name="Ustaszewska A."/>
            <person name="Vo N."/>
            <person name="White P.S."/>
            <person name="Williams A.L."/>
            <person name="Wills P.L."/>
            <person name="Wu J.-R."/>
            <person name="Wu K."/>
            <person name="Yang J."/>
            <person name="DeJong P."/>
            <person name="Bruce D."/>
            <person name="Doggett N.A."/>
            <person name="Deaven L."/>
            <person name="Schmutz J."/>
            <person name="Grimwood J."/>
            <person name="Richardson P."/>
            <person name="Rokhsar D.S."/>
            <person name="Eichler E.E."/>
            <person name="Gilna P."/>
            <person name="Lucas S.M."/>
            <person name="Myers R.M."/>
            <person name="Rubin E.M."/>
            <person name="Pennacchio L.A."/>
        </authorList>
    </citation>
    <scope>NUCLEOTIDE SEQUENCE [LARGE SCALE GENOMIC DNA]</scope>
</reference>
<reference key="8">
    <citation type="journal article" date="2004" name="Genome Res.">
        <title>The status, quality, and expansion of the NIH full-length cDNA project: the Mammalian Gene Collection (MGC).</title>
        <authorList>
            <consortium name="The MGC Project Team"/>
        </authorList>
    </citation>
    <scope>NUCLEOTIDE SEQUENCE [LARGE SCALE MRNA] (ISOFORM 1)</scope>
    <source>
        <tissue>Testis</tissue>
    </source>
</reference>
<reference key="9">
    <citation type="journal article" date="2023" name="Brain">
        <title>Aquaporin-4 and GPRC5B: old and new players in controlling brain oedema.</title>
        <authorList>
            <person name="Passchier E.M.J."/>
            <person name="Kerst S."/>
            <person name="Brouwers E."/>
            <person name="Hamilton E.M.C."/>
            <person name="Bisseling Q."/>
            <person name="Bugiani M."/>
            <person name="Waisfisz Q."/>
            <person name="Kitchen P."/>
            <person name="Unger L."/>
            <person name="Breur M."/>
            <person name="Hoogterp L."/>
            <person name="de Vries S.I."/>
            <person name="Abbink T.E.M."/>
            <person name="Kole M.H.P."/>
            <person name="Leurs R."/>
            <person name="Vischer H.F."/>
            <person name="Brignone M.S."/>
            <person name="Ambrosini E."/>
            <person name="Feillet F."/>
            <person name="Born A.P."/>
            <person name="Epstein L.G."/>
            <person name="Mansvelder H.D."/>
            <person name="Min R."/>
            <person name="van der Knaap M.S."/>
        </authorList>
    </citation>
    <scope>VARIANTS MLC3 ILE-176 INS AND ALA-177 INS</scope>
    <scope>CHARACTERIZATION OF VARIANTS MLC3 ILE-176 INS AND ALA-177 INS</scope>
    <scope>INVOLVEMENT IN MLC3</scope>
    <scope>FUNCTION</scope>
    <scope>TISSUE SPECIFICITY</scope>
</reference>
<gene>
    <name type="primary">GPRC5B</name>
    <name type="synonym">RAIG2</name>
</gene>
<organism>
    <name type="scientific">Homo sapiens</name>
    <name type="common">Human</name>
    <dbReference type="NCBI Taxonomy" id="9606"/>
    <lineage>
        <taxon>Eukaryota</taxon>
        <taxon>Metazoa</taxon>
        <taxon>Chordata</taxon>
        <taxon>Craniata</taxon>
        <taxon>Vertebrata</taxon>
        <taxon>Euteleostomi</taxon>
        <taxon>Mammalia</taxon>
        <taxon>Eutheria</taxon>
        <taxon>Euarchontoglires</taxon>
        <taxon>Primates</taxon>
        <taxon>Haplorrhini</taxon>
        <taxon>Catarrhini</taxon>
        <taxon>Hominidae</taxon>
        <taxon>Homo</taxon>
    </lineage>
</organism>
<dbReference type="EMBL" id="AF202640">
    <property type="protein sequence ID" value="AAF67321.1"/>
    <property type="molecule type" value="mRNA"/>
</dbReference>
<dbReference type="EMBL" id="AJ276101">
    <property type="protein sequence ID" value="CAC00632.1"/>
    <property type="molecule type" value="mRNA"/>
</dbReference>
<dbReference type="EMBL" id="AF181862">
    <property type="protein sequence ID" value="AAF05331.1"/>
    <property type="molecule type" value="mRNA"/>
</dbReference>
<dbReference type="EMBL" id="FJ529380">
    <property type="protein sequence ID" value="ACU30030.1"/>
    <property type="molecule type" value="mRNA"/>
</dbReference>
<dbReference type="EMBL" id="AK075119">
    <property type="protein sequence ID" value="BAC11414.1"/>
    <property type="molecule type" value="mRNA"/>
</dbReference>
<dbReference type="EMBL" id="AC004131">
    <property type="protein sequence ID" value="AAC27544.1"/>
    <property type="molecule type" value="Genomic_DNA"/>
</dbReference>
<dbReference type="EMBL" id="AC134300">
    <property type="status" value="NOT_ANNOTATED_CDS"/>
    <property type="molecule type" value="Genomic_DNA"/>
</dbReference>
<dbReference type="EMBL" id="BC034467">
    <property type="protein sequence ID" value="AAH34467.1"/>
    <property type="molecule type" value="mRNA"/>
</dbReference>
<dbReference type="CCDS" id="CCDS10581.1">
    <molecule id="Q9NZH0-1"/>
</dbReference>
<dbReference type="RefSeq" id="NP_057319.1">
    <molecule id="Q9NZH0-1"/>
    <property type="nucleotide sequence ID" value="NM_016235.3"/>
</dbReference>
<dbReference type="RefSeq" id="XP_006721114.1">
    <property type="nucleotide sequence ID" value="XM_006721051.2"/>
</dbReference>
<dbReference type="RefSeq" id="XP_006721115.1">
    <property type="nucleotide sequence ID" value="XM_006721052.2"/>
</dbReference>
<dbReference type="SMR" id="Q9NZH0"/>
<dbReference type="BioGRID" id="119688">
    <property type="interactions" value="119"/>
</dbReference>
<dbReference type="FunCoup" id="Q9NZH0">
    <property type="interactions" value="577"/>
</dbReference>
<dbReference type="IntAct" id="Q9NZH0">
    <property type="interactions" value="96"/>
</dbReference>
<dbReference type="MINT" id="Q9NZH0"/>
<dbReference type="STRING" id="9606.ENSP00000300571"/>
<dbReference type="ChEMBL" id="CHEMBL4523926"/>
<dbReference type="GlyCosmos" id="Q9NZH0">
    <property type="glycosylation" value="1 site, No reported glycans"/>
</dbReference>
<dbReference type="GlyGen" id="Q9NZH0">
    <property type="glycosylation" value="1 site"/>
</dbReference>
<dbReference type="iPTMnet" id="Q9NZH0"/>
<dbReference type="PhosphoSitePlus" id="Q9NZH0"/>
<dbReference type="SwissPalm" id="Q9NZH0"/>
<dbReference type="BioMuta" id="GPRC5B"/>
<dbReference type="DMDM" id="46396016"/>
<dbReference type="jPOST" id="Q9NZH0"/>
<dbReference type="MassIVE" id="Q9NZH0"/>
<dbReference type="PaxDb" id="9606-ENSP00000300571"/>
<dbReference type="PeptideAtlas" id="Q9NZH0"/>
<dbReference type="ProteomicsDB" id="12732"/>
<dbReference type="ProteomicsDB" id="83386">
    <molecule id="Q9NZH0-1"/>
</dbReference>
<dbReference type="Antibodypedia" id="12141">
    <property type="antibodies" value="296 antibodies from 30 providers"/>
</dbReference>
<dbReference type="DNASU" id="51704"/>
<dbReference type="Ensembl" id="ENST00000300571.7">
    <molecule id="Q9NZH0-1"/>
    <property type="protein sequence ID" value="ENSP00000300571.2"/>
    <property type="gene ID" value="ENSG00000167191.12"/>
</dbReference>
<dbReference type="Ensembl" id="ENST00000535671.5">
    <molecule id="Q9NZH0-2"/>
    <property type="protein sequence ID" value="ENSP00000442858.1"/>
    <property type="gene ID" value="ENSG00000167191.12"/>
</dbReference>
<dbReference type="Ensembl" id="ENST00000569479.5">
    <molecule id="Q9NZH0-1"/>
    <property type="protein sequence ID" value="ENSP00000454727.1"/>
    <property type="gene ID" value="ENSG00000167191.12"/>
</dbReference>
<dbReference type="Ensembl" id="ENST00000569847.1">
    <molecule id="Q9NZH0-1"/>
    <property type="protein sequence ID" value="ENSP00000457283.1"/>
    <property type="gene ID" value="ENSG00000167191.12"/>
</dbReference>
<dbReference type="GeneID" id="51704"/>
<dbReference type="KEGG" id="hsa:51704"/>
<dbReference type="MANE-Select" id="ENST00000300571.7">
    <property type="protein sequence ID" value="ENSP00000300571.2"/>
    <property type="RefSeq nucleotide sequence ID" value="NM_016235.3"/>
    <property type="RefSeq protein sequence ID" value="NP_057319.1"/>
</dbReference>
<dbReference type="UCSC" id="uc002dgt.4">
    <molecule id="Q9NZH0-1"/>
    <property type="organism name" value="human"/>
</dbReference>
<dbReference type="AGR" id="HGNC:13308"/>
<dbReference type="CTD" id="51704"/>
<dbReference type="DisGeNET" id="51704"/>
<dbReference type="GeneCards" id="GPRC5B"/>
<dbReference type="GeneReviews" id="GPRC5B"/>
<dbReference type="HGNC" id="HGNC:13308">
    <property type="gene designation" value="GPRC5B"/>
</dbReference>
<dbReference type="HPA" id="ENSG00000167191">
    <property type="expression patterns" value="Tissue enhanced (brain)"/>
</dbReference>
<dbReference type="MalaCards" id="GPRC5B"/>
<dbReference type="MIM" id="605948">
    <property type="type" value="gene"/>
</dbReference>
<dbReference type="MIM" id="620447">
    <property type="type" value="phenotype"/>
</dbReference>
<dbReference type="neXtProt" id="NX_Q9NZH0"/>
<dbReference type="OpenTargets" id="ENSG00000167191"/>
<dbReference type="PharmGKB" id="PA28938"/>
<dbReference type="VEuPathDB" id="HostDB:ENSG00000167191"/>
<dbReference type="eggNOG" id="ENOG502QWT9">
    <property type="taxonomic scope" value="Eukaryota"/>
</dbReference>
<dbReference type="GeneTree" id="ENSGT00950000182961"/>
<dbReference type="HOGENOM" id="CLU_044162_1_1_1"/>
<dbReference type="InParanoid" id="Q9NZH0"/>
<dbReference type="OMA" id="GWQLVGM"/>
<dbReference type="OrthoDB" id="9882719at2759"/>
<dbReference type="PAN-GO" id="Q9NZH0">
    <property type="GO annotations" value="6 GO annotations based on evolutionary models"/>
</dbReference>
<dbReference type="TreeFam" id="TF321410"/>
<dbReference type="PathwayCommons" id="Q9NZH0"/>
<dbReference type="SignaLink" id="Q9NZH0"/>
<dbReference type="BioGRID-ORCS" id="51704">
    <property type="hits" value="16 hits in 1164 CRISPR screens"/>
</dbReference>
<dbReference type="CD-CODE" id="FB4E32DD">
    <property type="entry name" value="Presynaptic clusters and postsynaptic densities"/>
</dbReference>
<dbReference type="ChiTaRS" id="GPRC5B">
    <property type="organism name" value="human"/>
</dbReference>
<dbReference type="GeneWiki" id="GPRC5B"/>
<dbReference type="GenomeRNAi" id="51704"/>
<dbReference type="Pharos" id="Q9NZH0">
    <property type="development level" value="Tbio"/>
</dbReference>
<dbReference type="PRO" id="PR:Q9NZH0"/>
<dbReference type="Proteomes" id="UP000005640">
    <property type="component" value="Chromosome 16"/>
</dbReference>
<dbReference type="RNAct" id="Q9NZH0">
    <property type="molecule type" value="protein"/>
</dbReference>
<dbReference type="Bgee" id="ENSG00000167191">
    <property type="expression patterns" value="Expressed in medial globus pallidus and 194 other cell types or tissues"/>
</dbReference>
<dbReference type="ExpressionAtlas" id="Q9NZH0">
    <property type="expression patterns" value="baseline and differential"/>
</dbReference>
<dbReference type="GO" id="GO:0009986">
    <property type="term" value="C:cell surface"/>
    <property type="evidence" value="ECO:0000250"/>
    <property type="project" value="CAFA"/>
</dbReference>
<dbReference type="GO" id="GO:0030659">
    <property type="term" value="C:cytoplasmic vesicle membrane"/>
    <property type="evidence" value="ECO:0007669"/>
    <property type="project" value="UniProtKB-SubCell"/>
</dbReference>
<dbReference type="GO" id="GO:0005829">
    <property type="term" value="C:cytosol"/>
    <property type="evidence" value="ECO:0000314"/>
    <property type="project" value="HPA"/>
</dbReference>
<dbReference type="GO" id="GO:0070062">
    <property type="term" value="C:extracellular exosome"/>
    <property type="evidence" value="ECO:0000314"/>
    <property type="project" value="UniProtKB"/>
</dbReference>
<dbReference type="GO" id="GO:0005615">
    <property type="term" value="C:extracellular space"/>
    <property type="evidence" value="ECO:0007005"/>
    <property type="project" value="UniProtKB"/>
</dbReference>
<dbReference type="GO" id="GO:0043231">
    <property type="term" value="C:intracellular membrane-bounded organelle"/>
    <property type="evidence" value="ECO:0000314"/>
    <property type="project" value="HPA"/>
</dbReference>
<dbReference type="GO" id="GO:0045121">
    <property type="term" value="C:membrane raft"/>
    <property type="evidence" value="ECO:0000314"/>
    <property type="project" value="MGI"/>
</dbReference>
<dbReference type="GO" id="GO:0005730">
    <property type="term" value="C:nucleolus"/>
    <property type="evidence" value="ECO:0000314"/>
    <property type="project" value="HPA"/>
</dbReference>
<dbReference type="GO" id="GO:0005654">
    <property type="term" value="C:nucleoplasm"/>
    <property type="evidence" value="ECO:0000314"/>
    <property type="project" value="HPA"/>
</dbReference>
<dbReference type="GO" id="GO:0005886">
    <property type="term" value="C:plasma membrane"/>
    <property type="evidence" value="ECO:0000318"/>
    <property type="project" value="GO_Central"/>
</dbReference>
<dbReference type="GO" id="GO:0043235">
    <property type="term" value="C:receptor complex"/>
    <property type="evidence" value="ECO:0000318"/>
    <property type="project" value="GO_Central"/>
</dbReference>
<dbReference type="GO" id="GO:0004930">
    <property type="term" value="F:G protein-coupled receptor activity"/>
    <property type="evidence" value="ECO:0007669"/>
    <property type="project" value="UniProtKB-KW"/>
</dbReference>
<dbReference type="GO" id="GO:0001664">
    <property type="term" value="F:G protein-coupled receptor binding"/>
    <property type="evidence" value="ECO:0000250"/>
    <property type="project" value="CAFA"/>
</dbReference>
<dbReference type="GO" id="GO:0030295">
    <property type="term" value="F:protein kinase activator activity"/>
    <property type="evidence" value="ECO:0000314"/>
    <property type="project" value="MGI"/>
</dbReference>
<dbReference type="GO" id="GO:0019901">
    <property type="term" value="F:protein kinase binding"/>
    <property type="evidence" value="ECO:0000250"/>
    <property type="project" value="CAFA"/>
</dbReference>
<dbReference type="GO" id="GO:1990782">
    <property type="term" value="F:protein tyrosine kinase binding"/>
    <property type="evidence" value="ECO:0000353"/>
    <property type="project" value="MGI"/>
</dbReference>
<dbReference type="GO" id="GO:0006884">
    <property type="term" value="P:cell volume homeostasis"/>
    <property type="evidence" value="ECO:0000315"/>
    <property type="project" value="UniProtKB"/>
</dbReference>
<dbReference type="GO" id="GO:0043123">
    <property type="term" value="P:positive regulation of canonical NF-kappaB signal transduction"/>
    <property type="evidence" value="ECO:0000250"/>
    <property type="project" value="CAFA"/>
</dbReference>
<dbReference type="GO" id="GO:0090263">
    <property type="term" value="P:positive regulation of canonical Wnt signaling pathway"/>
    <property type="evidence" value="ECO:0000250"/>
    <property type="project" value="CAFA"/>
</dbReference>
<dbReference type="GO" id="GO:0050729">
    <property type="term" value="P:positive regulation of inflammatory response"/>
    <property type="evidence" value="ECO:0000250"/>
    <property type="project" value="CAFA"/>
</dbReference>
<dbReference type="GO" id="GO:0060907">
    <property type="term" value="P:positive regulation of macrophage cytokine production"/>
    <property type="evidence" value="ECO:0000250"/>
    <property type="project" value="CAFA"/>
</dbReference>
<dbReference type="GO" id="GO:0045666">
    <property type="term" value="P:positive regulation of neuron differentiation"/>
    <property type="evidence" value="ECO:0000250"/>
    <property type="project" value="CAFA"/>
</dbReference>
<dbReference type="GO" id="GO:0061098">
    <property type="term" value="P:positive regulation of protein tyrosine kinase activity"/>
    <property type="evidence" value="ECO:0000250"/>
    <property type="project" value="CAFA"/>
</dbReference>
<dbReference type="CDD" id="cd15278">
    <property type="entry name" value="7tmC_RAIG2_GPRC5B"/>
    <property type="match status" value="1"/>
</dbReference>
<dbReference type="InterPro" id="IPR017978">
    <property type="entry name" value="GPCR_3_C"/>
</dbReference>
<dbReference type="InterPro" id="IPR051753">
    <property type="entry name" value="RA-inducible_GPCR3"/>
</dbReference>
<dbReference type="PANTHER" id="PTHR14511">
    <property type="entry name" value="G PROTEIN COUPLED RECEPTOR, CLASS C, GROUP 5"/>
    <property type="match status" value="1"/>
</dbReference>
<dbReference type="PANTHER" id="PTHR14511:SF9">
    <property type="entry name" value="G-PROTEIN COUPLED RECEPTOR FAMILY C GROUP 5 MEMBER B"/>
    <property type="match status" value="1"/>
</dbReference>
<dbReference type="Pfam" id="PF00003">
    <property type="entry name" value="7tm_3"/>
    <property type="match status" value="1"/>
</dbReference>
<dbReference type="PROSITE" id="PS50259">
    <property type="entry name" value="G_PROTEIN_RECEP_F3_4"/>
    <property type="match status" value="1"/>
</dbReference>
<name>GPC5B_HUMAN</name>
<keyword id="KW-0025">Alternative splicing</keyword>
<keyword id="KW-1003">Cell membrane</keyword>
<keyword id="KW-0968">Cytoplasmic vesicle</keyword>
<keyword id="KW-0225">Disease variant</keyword>
<keyword id="KW-0297">G-protein coupled receptor</keyword>
<keyword id="KW-0325">Glycoprotein</keyword>
<keyword id="KW-0472">Membrane</keyword>
<keyword id="KW-0597">Phosphoprotein</keyword>
<keyword id="KW-1267">Proteomics identification</keyword>
<keyword id="KW-0675">Receptor</keyword>
<keyword id="KW-1185">Reference proteome</keyword>
<keyword id="KW-0732">Signal</keyword>
<keyword id="KW-0807">Transducer</keyword>
<keyword id="KW-0812">Transmembrane</keyword>
<keyword id="KW-1133">Transmembrane helix</keyword>
<protein>
    <recommendedName>
        <fullName>G-protein coupled receptor family C group 5 member B</fullName>
    </recommendedName>
    <alternativeName>
        <fullName>A-69G12.1</fullName>
    </alternativeName>
    <alternativeName>
        <fullName>Retinoic acid-induced gene 2 protein</fullName>
        <shortName>RAIG-2</shortName>
    </alternativeName>
</protein>
<evidence type="ECO:0000250" key="1">
    <source>
        <dbReference type="UniProtKB" id="Q923Z0"/>
    </source>
</evidence>
<evidence type="ECO:0000255" key="2"/>
<evidence type="ECO:0000256" key="3">
    <source>
        <dbReference type="SAM" id="MobiDB-lite"/>
    </source>
</evidence>
<evidence type="ECO:0000269" key="4">
    <source>
    </source>
</evidence>
<evidence type="ECO:0000269" key="5">
    <source>
    </source>
</evidence>
<evidence type="ECO:0000269" key="6">
    <source>
    </source>
</evidence>
<evidence type="ECO:0000303" key="7">
    <source ref="4"/>
</evidence>
<evidence type="ECO:0000305" key="8"/>
<proteinExistence type="evidence at protein level"/>
<sequence length="403" mass="44795">MFVASERKMRAHQVLTFLLLFVITSVASENASTSRGCGLDLLPQYVSLCDLDAIWGIVVEAVAGAGALITLLLMLILLVRLPFIKEKEKKSPVGLHFLFLLGTLGLFGLTFAFIIQEDETICSVRRFLWGVLFALCFSCLLSQAWRVRRLVRHGTGPAGWQLVGLALCLMLVQVIIAVEWLVLTVLRDTRPACAYEPMDFVMALIYDMVLLVVTLGLALFTLCGKFKRWKLNGAFLLITAFLSVLIWVAWMTMYLFGNVKLQQGDAWNDPTLAITLAASGWVFVIFHAIPEIHCTLLPALQENTPNYFDTSQPRMRETAFEEDVQLPRAYMENKAFSMDEHNAALRTAGFPNGSLGKRPSGSLGKRPSAPFRSNVYQPTEMAVVLNGGTIPTAPPSHTGRHLW</sequence>
<feature type="signal peptide" evidence="2">
    <location>
        <begin position="1"/>
        <end position="28"/>
    </location>
</feature>
<feature type="chain" id="PRO_0000012965" description="G-protein coupled receptor family C group 5 member B">
    <location>
        <begin position="29"/>
        <end position="403"/>
    </location>
</feature>
<feature type="topological domain" description="Extracellular" evidence="2">
    <location>
        <begin position="29"/>
        <end position="56"/>
    </location>
</feature>
<feature type="transmembrane region" description="Helical; Name=1" evidence="2">
    <location>
        <begin position="57"/>
        <end position="77"/>
    </location>
</feature>
<feature type="topological domain" description="Cytoplasmic" evidence="2">
    <location>
        <begin position="78"/>
        <end position="94"/>
    </location>
</feature>
<feature type="transmembrane region" description="Helical; Name=2" evidence="2">
    <location>
        <begin position="95"/>
        <end position="115"/>
    </location>
</feature>
<feature type="topological domain" description="Extracellular" evidence="2">
    <location>
        <begin position="116"/>
        <end position="126"/>
    </location>
</feature>
<feature type="transmembrane region" description="Helical; Name=3" evidence="2">
    <location>
        <begin position="127"/>
        <end position="147"/>
    </location>
</feature>
<feature type="topological domain" description="Cytoplasmic" evidence="2">
    <location>
        <begin position="148"/>
        <end position="162"/>
    </location>
</feature>
<feature type="transmembrane region" description="Helical; Name=4" evidence="2">
    <location>
        <begin position="163"/>
        <end position="183"/>
    </location>
</feature>
<feature type="topological domain" description="Extracellular" evidence="2">
    <location>
        <begin position="184"/>
        <end position="199"/>
    </location>
</feature>
<feature type="transmembrane region" description="Helical; Name=5" evidence="2">
    <location>
        <begin position="200"/>
        <end position="220"/>
    </location>
</feature>
<feature type="topological domain" description="Cytoplasmic" evidence="2">
    <location>
        <begin position="221"/>
        <end position="234"/>
    </location>
</feature>
<feature type="transmembrane region" description="Helical; Name=6" evidence="2">
    <location>
        <begin position="235"/>
        <end position="255"/>
    </location>
</feature>
<feature type="topological domain" description="Extracellular" evidence="2">
    <location>
        <begin position="256"/>
        <end position="271"/>
    </location>
</feature>
<feature type="transmembrane region" description="Helical; Name=7" evidence="2">
    <location>
        <begin position="272"/>
        <end position="292"/>
    </location>
</feature>
<feature type="topological domain" description="Cytoplasmic" evidence="2">
    <location>
        <begin position="293"/>
        <end position="403"/>
    </location>
</feature>
<feature type="region of interest" description="Disordered" evidence="3">
    <location>
        <begin position="349"/>
        <end position="371"/>
    </location>
</feature>
<feature type="modified residue" description="Phosphoserine" evidence="1">
    <location>
        <position position="354"/>
    </location>
</feature>
<feature type="glycosylation site" description="N-linked (GlcNAc...) asparagine" evidence="2">
    <location>
        <position position="30"/>
    </location>
</feature>
<feature type="splice variant" id="VSP_047585" description="In isoform 2." evidence="7">
    <original>IPTAPPSHTGRHLW</original>
    <variation>EMVTHPRSLESFGAF</variation>
    <location>
        <begin position="390"/>
        <end position="403"/>
    </location>
</feature>
<feature type="sequence variant" id="VAR_088779" description="In MLC3; likely pathogenic; reduced regulatory volume decrease in patient cells exposed to hypotonic shock; increased protein abundance in patient cells." evidence="6">
    <original>I</original>
    <variation>II</variation>
    <location>
        <position position="176"/>
    </location>
</feature>
<feature type="sequence variant" id="VAR_088780" description="In MLC3; likely pathogenic; reduced regulatory volume decrease in patient cells exposed to hypotonic shock; increased protein abundance in patient cells." evidence="6">
    <original>A</original>
    <variation>AA</variation>
    <location>
        <position position="177"/>
    </location>
</feature>
<feature type="sequence conflict" description="In Ref. 5; BAC11414." evidence="8" ref="5">
    <original>V</original>
    <variation>A</variation>
    <location>
        <position position="46"/>
    </location>
</feature>